<reference key="1">
    <citation type="journal article" date="2004" name="Nature">
        <title>Genome evolution in yeasts.</title>
        <authorList>
            <person name="Dujon B."/>
            <person name="Sherman D."/>
            <person name="Fischer G."/>
            <person name="Durrens P."/>
            <person name="Casaregola S."/>
            <person name="Lafontaine I."/>
            <person name="de Montigny J."/>
            <person name="Marck C."/>
            <person name="Neuveglise C."/>
            <person name="Talla E."/>
            <person name="Goffard N."/>
            <person name="Frangeul L."/>
            <person name="Aigle M."/>
            <person name="Anthouard V."/>
            <person name="Babour A."/>
            <person name="Barbe V."/>
            <person name="Barnay S."/>
            <person name="Blanchin S."/>
            <person name="Beckerich J.-M."/>
            <person name="Beyne E."/>
            <person name="Bleykasten C."/>
            <person name="Boisrame A."/>
            <person name="Boyer J."/>
            <person name="Cattolico L."/>
            <person name="Confanioleri F."/>
            <person name="de Daruvar A."/>
            <person name="Despons L."/>
            <person name="Fabre E."/>
            <person name="Fairhead C."/>
            <person name="Ferry-Dumazet H."/>
            <person name="Groppi A."/>
            <person name="Hantraye F."/>
            <person name="Hennequin C."/>
            <person name="Jauniaux N."/>
            <person name="Joyet P."/>
            <person name="Kachouri R."/>
            <person name="Kerrest A."/>
            <person name="Koszul R."/>
            <person name="Lemaire M."/>
            <person name="Lesur I."/>
            <person name="Ma L."/>
            <person name="Muller H."/>
            <person name="Nicaud J.-M."/>
            <person name="Nikolski M."/>
            <person name="Oztas S."/>
            <person name="Ozier-Kalogeropoulos O."/>
            <person name="Pellenz S."/>
            <person name="Potier S."/>
            <person name="Richard G.-F."/>
            <person name="Straub M.-L."/>
            <person name="Suleau A."/>
            <person name="Swennen D."/>
            <person name="Tekaia F."/>
            <person name="Wesolowski-Louvel M."/>
            <person name="Westhof E."/>
            <person name="Wirth B."/>
            <person name="Zeniou-Meyer M."/>
            <person name="Zivanovic Y."/>
            <person name="Bolotin-Fukuhara M."/>
            <person name="Thierry A."/>
            <person name="Bouchier C."/>
            <person name="Caudron B."/>
            <person name="Scarpelli C."/>
            <person name="Gaillardin C."/>
            <person name="Weissenbach J."/>
            <person name="Wincker P."/>
            <person name="Souciet J.-L."/>
        </authorList>
    </citation>
    <scope>NUCLEOTIDE SEQUENCE [LARGE SCALE GENOMIC DNA]</scope>
    <source>
        <strain>ATCC 8585 / CBS 2359 / DSM 70799 / NBRC 1267 / NRRL Y-1140 / WM37</strain>
    </source>
</reference>
<evidence type="ECO:0000250" key="1"/>
<evidence type="ECO:0000256" key="2">
    <source>
        <dbReference type="SAM" id="MobiDB-lite"/>
    </source>
</evidence>
<evidence type="ECO:0000305" key="3"/>
<dbReference type="EMBL" id="CR382126">
    <property type="protein sequence ID" value="CAG98015.1"/>
    <property type="molecule type" value="Genomic_DNA"/>
</dbReference>
<dbReference type="RefSeq" id="XP_455307.1">
    <property type="nucleotide sequence ID" value="XM_455307.1"/>
</dbReference>
<dbReference type="SMR" id="Q6CL82"/>
<dbReference type="FunCoup" id="Q6CL82">
    <property type="interactions" value="1530"/>
</dbReference>
<dbReference type="STRING" id="284590.Q6CL82"/>
<dbReference type="PaxDb" id="284590-Q6CL82"/>
<dbReference type="KEGG" id="kla:KLLA0_F05005g"/>
<dbReference type="eggNOG" id="KOG0358">
    <property type="taxonomic scope" value="Eukaryota"/>
</dbReference>
<dbReference type="HOGENOM" id="CLU_008891_9_1_1"/>
<dbReference type="InParanoid" id="Q6CL82"/>
<dbReference type="OMA" id="HPAANMI"/>
<dbReference type="Proteomes" id="UP000000598">
    <property type="component" value="Chromosome F"/>
</dbReference>
<dbReference type="GO" id="GO:0005832">
    <property type="term" value="C:chaperonin-containing T-complex"/>
    <property type="evidence" value="ECO:0007669"/>
    <property type="project" value="UniProtKB-ARBA"/>
</dbReference>
<dbReference type="GO" id="GO:0005524">
    <property type="term" value="F:ATP binding"/>
    <property type="evidence" value="ECO:0007669"/>
    <property type="project" value="UniProtKB-KW"/>
</dbReference>
<dbReference type="GO" id="GO:0016887">
    <property type="term" value="F:ATP hydrolysis activity"/>
    <property type="evidence" value="ECO:0007669"/>
    <property type="project" value="InterPro"/>
</dbReference>
<dbReference type="GO" id="GO:0140662">
    <property type="term" value="F:ATP-dependent protein folding chaperone"/>
    <property type="evidence" value="ECO:0007669"/>
    <property type="project" value="InterPro"/>
</dbReference>
<dbReference type="GO" id="GO:0051082">
    <property type="term" value="F:unfolded protein binding"/>
    <property type="evidence" value="ECO:0007669"/>
    <property type="project" value="InterPro"/>
</dbReference>
<dbReference type="GO" id="GO:0051086">
    <property type="term" value="P:chaperone mediated protein folding independent of cofactor"/>
    <property type="evidence" value="ECO:0007669"/>
    <property type="project" value="UniProtKB-ARBA"/>
</dbReference>
<dbReference type="CDD" id="cd03338">
    <property type="entry name" value="TCP1_delta"/>
    <property type="match status" value="1"/>
</dbReference>
<dbReference type="FunFam" id="3.50.7.10:FF:000010">
    <property type="entry name" value="T-complex protein 1 subunit delta"/>
    <property type="match status" value="1"/>
</dbReference>
<dbReference type="Gene3D" id="3.50.7.10">
    <property type="entry name" value="GroEL"/>
    <property type="match status" value="1"/>
</dbReference>
<dbReference type="Gene3D" id="1.10.560.10">
    <property type="entry name" value="GroEL-like equatorial domain"/>
    <property type="match status" value="1"/>
</dbReference>
<dbReference type="Gene3D" id="3.30.260.10">
    <property type="entry name" value="TCP-1-like chaperonin intermediate domain"/>
    <property type="match status" value="1"/>
</dbReference>
<dbReference type="InterPro" id="IPR012717">
    <property type="entry name" value="Chap_CCT_delta"/>
</dbReference>
<dbReference type="InterPro" id="IPR017998">
    <property type="entry name" value="Chaperone_TCP-1"/>
</dbReference>
<dbReference type="InterPro" id="IPR002194">
    <property type="entry name" value="Chaperonin_TCP-1_CS"/>
</dbReference>
<dbReference type="InterPro" id="IPR002423">
    <property type="entry name" value="Cpn60/GroEL/TCP-1"/>
</dbReference>
<dbReference type="InterPro" id="IPR027409">
    <property type="entry name" value="GroEL-like_apical_dom_sf"/>
</dbReference>
<dbReference type="InterPro" id="IPR027413">
    <property type="entry name" value="GROEL-like_equatorial_sf"/>
</dbReference>
<dbReference type="InterPro" id="IPR027410">
    <property type="entry name" value="TCP-1-like_intermed_sf"/>
</dbReference>
<dbReference type="InterPro" id="IPR053374">
    <property type="entry name" value="TCP-1_chaperonin"/>
</dbReference>
<dbReference type="InterPro" id="IPR054827">
    <property type="entry name" value="thermosome_alpha"/>
</dbReference>
<dbReference type="NCBIfam" id="TIGR02342">
    <property type="entry name" value="chap_CCT_delta"/>
    <property type="match status" value="1"/>
</dbReference>
<dbReference type="NCBIfam" id="NF041082">
    <property type="entry name" value="thermosome_alpha"/>
    <property type="match status" value="1"/>
</dbReference>
<dbReference type="NCBIfam" id="NF041083">
    <property type="entry name" value="thermosome_beta"/>
    <property type="match status" value="1"/>
</dbReference>
<dbReference type="PANTHER" id="PTHR11353">
    <property type="entry name" value="CHAPERONIN"/>
    <property type="match status" value="1"/>
</dbReference>
<dbReference type="Pfam" id="PF00118">
    <property type="entry name" value="Cpn60_TCP1"/>
    <property type="match status" value="1"/>
</dbReference>
<dbReference type="PRINTS" id="PR00304">
    <property type="entry name" value="TCOMPLEXTCP1"/>
</dbReference>
<dbReference type="SUPFAM" id="SSF52029">
    <property type="entry name" value="GroEL apical domain-like"/>
    <property type="match status" value="1"/>
</dbReference>
<dbReference type="SUPFAM" id="SSF48592">
    <property type="entry name" value="GroEL equatorial domain-like"/>
    <property type="match status" value="1"/>
</dbReference>
<dbReference type="SUPFAM" id="SSF54849">
    <property type="entry name" value="GroEL-intermediate domain like"/>
    <property type="match status" value="1"/>
</dbReference>
<dbReference type="PROSITE" id="PS00750">
    <property type="entry name" value="TCP1_1"/>
    <property type="match status" value="1"/>
</dbReference>
<dbReference type="PROSITE" id="PS00751">
    <property type="entry name" value="TCP1_2"/>
    <property type="match status" value="1"/>
</dbReference>
<dbReference type="PROSITE" id="PS00995">
    <property type="entry name" value="TCP1_3"/>
    <property type="match status" value="1"/>
</dbReference>
<gene>
    <name type="primary">CCT4</name>
    <name type="ordered locus">KLLA0F05005g</name>
</gene>
<protein>
    <recommendedName>
        <fullName>T-complex protein 1 subunit delta</fullName>
        <shortName>TCP-1-delta</shortName>
    </recommendedName>
    <alternativeName>
        <fullName>CCT-delta</fullName>
    </alternativeName>
</protein>
<accession>Q6CL82</accession>
<proteinExistence type="inferred from homology"/>
<organism>
    <name type="scientific">Kluyveromyces lactis (strain ATCC 8585 / CBS 2359 / DSM 70799 / NBRC 1267 / NRRL Y-1140 / WM37)</name>
    <name type="common">Yeast</name>
    <name type="synonym">Candida sphaerica</name>
    <dbReference type="NCBI Taxonomy" id="284590"/>
    <lineage>
        <taxon>Eukaryota</taxon>
        <taxon>Fungi</taxon>
        <taxon>Dikarya</taxon>
        <taxon>Ascomycota</taxon>
        <taxon>Saccharomycotina</taxon>
        <taxon>Saccharomycetes</taxon>
        <taxon>Saccharomycetales</taxon>
        <taxon>Saccharomycetaceae</taxon>
        <taxon>Kluyveromyces</taxon>
    </lineage>
</organism>
<comment type="function">
    <text evidence="1">Molecular chaperone; assists the folding of proteins upon ATP hydrolysis. Known to play a role, in vitro, in the folding of actin and tubulin (By similarity).</text>
</comment>
<comment type="subunit">
    <text evidence="3">Heterooligomeric complex of about 850 to 900 kDa that forms two stacked rings, 12 to 16 nm in diameter.</text>
</comment>
<comment type="subcellular location">
    <subcellularLocation>
        <location evidence="3">Cytoplasm</location>
    </subcellularLocation>
</comment>
<comment type="similarity">
    <text evidence="3">Belongs to the TCP-1 chaperonin family.</text>
</comment>
<name>TCPD_KLULA</name>
<keyword id="KW-0067">ATP-binding</keyword>
<keyword id="KW-0143">Chaperone</keyword>
<keyword id="KW-0963">Cytoplasm</keyword>
<keyword id="KW-0547">Nucleotide-binding</keyword>
<keyword id="KW-1185">Reference proteome</keyword>
<sequence>MVSQAKQPSNATFKNREKPQEVRKANIIAARAVADAIRTSLGPKGMDKMIKTSRGDIIISNDGHTILKQMAILHPVAKMLVEVSGAQDVEAGDGTTSVVIMTGALLGAAEKLLNKGIHPTIIAESFQRAAERSVEILLNMSTKISLDDKEALVRAASTSLSSKIVSQHSSFLAPLAVDCVLSIASHDSTNVDLNDIRLIKKVGGTIDDTEMVNGVVLTQNAVKTAGGPTRIEKARIGLIQFQISPPKPDTENNIVVNDYRQMDKILKEERAYLLNICKKIKKAKCNVLLIQKSILRDAVNDLALHFLSKLGIMVVRDIERDEVEFLSKSLGCKPISDVELFTEDRLGSADVVEEVESDGSNIVTITGVKTTNKNPTVSVVIRGANNMVLDETERSLHDALCVIRCLVKERALIAGGGAPEIEVSYRLMKEARTMEGVEAFVWQEYAEALEVIPTTLAENAGLNSLNVVTELRLRHENGESNSGISVRRSGTSNTYEDHILQPVLVSTSAIRLASECVKSILRIDDITFSR</sequence>
<feature type="chain" id="PRO_0000128342" description="T-complex protein 1 subunit delta">
    <location>
        <begin position="1"/>
        <end position="530"/>
    </location>
</feature>
<feature type="region of interest" description="Disordered" evidence="2">
    <location>
        <begin position="1"/>
        <end position="20"/>
    </location>
</feature>
<feature type="compositionally biased region" description="Polar residues" evidence="2">
    <location>
        <begin position="1"/>
        <end position="13"/>
    </location>
</feature>